<organism>
    <name type="scientific">Cenarchaeum symbiosum (strain A)</name>
    <dbReference type="NCBI Taxonomy" id="414004"/>
    <lineage>
        <taxon>Archaea</taxon>
        <taxon>Nitrososphaerota</taxon>
        <taxon>Candidatus Cenarchaeales</taxon>
        <taxon>Candidatus Cenarchaeaceae</taxon>
        <taxon>Candidatus Cenarchaeum</taxon>
    </lineage>
</organism>
<evidence type="ECO:0000255" key="1">
    <source>
        <dbReference type="HAMAP-Rule" id="MF_00497"/>
    </source>
</evidence>
<accession>A0RXV2</accession>
<protein>
    <recommendedName>
        <fullName evidence="1">Glycerol-1-phosphate dehydrogenase [NAD(P)+]</fullName>
        <shortName evidence="1">G1P dehydrogenase</shortName>
        <shortName evidence="1">G1PDH</shortName>
        <ecNumber evidence="1">1.1.1.261</ecNumber>
    </recommendedName>
    <alternativeName>
        <fullName evidence="1">Enantiomeric glycerophosphate synthase</fullName>
    </alternativeName>
    <alternativeName>
        <fullName evidence="1">sn-glycerol-1-phosphate dehydrogenase</fullName>
    </alternativeName>
</protein>
<dbReference type="EC" id="1.1.1.261" evidence="1"/>
<dbReference type="EMBL" id="DP000238">
    <property type="protein sequence ID" value="ABK78169.1"/>
    <property type="molecule type" value="Genomic_DNA"/>
</dbReference>
<dbReference type="SMR" id="A0RXV2"/>
<dbReference type="STRING" id="414004.CENSYa_1547"/>
<dbReference type="EnsemblBacteria" id="ABK78169">
    <property type="protein sequence ID" value="ABK78169"/>
    <property type="gene ID" value="CENSYa_1547"/>
</dbReference>
<dbReference type="KEGG" id="csy:CENSYa_1547"/>
<dbReference type="PATRIC" id="fig|414004.10.peg.1416"/>
<dbReference type="HOGENOM" id="CLU_038362_0_0_2"/>
<dbReference type="UniPathway" id="UPA00940"/>
<dbReference type="Proteomes" id="UP000000758">
    <property type="component" value="Chromosome"/>
</dbReference>
<dbReference type="GO" id="GO:0005737">
    <property type="term" value="C:cytoplasm"/>
    <property type="evidence" value="ECO:0007669"/>
    <property type="project" value="UniProtKB-SubCell"/>
</dbReference>
<dbReference type="GO" id="GO:0106357">
    <property type="term" value="F:glycerol-1-phosphate dehydrogenase (NAD+) activity"/>
    <property type="evidence" value="ECO:0007669"/>
    <property type="project" value="RHEA"/>
</dbReference>
<dbReference type="GO" id="GO:0106358">
    <property type="term" value="F:glycerol-1-phosphate dehydrogenase (NADP+) activity"/>
    <property type="evidence" value="ECO:0007669"/>
    <property type="project" value="RHEA"/>
</dbReference>
<dbReference type="GO" id="GO:0046872">
    <property type="term" value="F:metal ion binding"/>
    <property type="evidence" value="ECO:0007669"/>
    <property type="project" value="UniProtKB-KW"/>
</dbReference>
<dbReference type="GO" id="GO:0006650">
    <property type="term" value="P:glycerophospholipid metabolic process"/>
    <property type="evidence" value="ECO:0007669"/>
    <property type="project" value="UniProtKB-UniRule"/>
</dbReference>
<dbReference type="GO" id="GO:0008654">
    <property type="term" value="P:phospholipid biosynthetic process"/>
    <property type="evidence" value="ECO:0007669"/>
    <property type="project" value="UniProtKB-KW"/>
</dbReference>
<dbReference type="CDD" id="cd08173">
    <property type="entry name" value="Gro1PDH"/>
    <property type="match status" value="1"/>
</dbReference>
<dbReference type="Gene3D" id="3.40.50.1970">
    <property type="match status" value="1"/>
</dbReference>
<dbReference type="Gene3D" id="1.20.1090.10">
    <property type="entry name" value="Dehydroquinate synthase-like - alpha domain"/>
    <property type="match status" value="1"/>
</dbReference>
<dbReference type="HAMAP" id="MF_00497_A">
    <property type="entry name" value="G1P_dehydrogenase_A"/>
    <property type="match status" value="1"/>
</dbReference>
<dbReference type="InterPro" id="IPR023002">
    <property type="entry name" value="G1P_dehydrogenase_arc"/>
</dbReference>
<dbReference type="InterPro" id="IPR032837">
    <property type="entry name" value="G1PDH"/>
</dbReference>
<dbReference type="InterPro" id="IPR016205">
    <property type="entry name" value="Glycerol_DH"/>
</dbReference>
<dbReference type="PANTHER" id="PTHR43616">
    <property type="entry name" value="GLYCEROL DEHYDROGENASE"/>
    <property type="match status" value="1"/>
</dbReference>
<dbReference type="PANTHER" id="PTHR43616:SF5">
    <property type="entry name" value="GLYCEROL DEHYDROGENASE 1"/>
    <property type="match status" value="1"/>
</dbReference>
<dbReference type="Pfam" id="PF13685">
    <property type="entry name" value="Fe-ADH_2"/>
    <property type="match status" value="1"/>
</dbReference>
<dbReference type="PIRSF" id="PIRSF000112">
    <property type="entry name" value="Glycerol_dehydrogenase"/>
    <property type="match status" value="1"/>
</dbReference>
<dbReference type="SUPFAM" id="SSF56796">
    <property type="entry name" value="Dehydroquinate synthase-like"/>
    <property type="match status" value="1"/>
</dbReference>
<proteinExistence type="inferred from homology"/>
<keyword id="KW-0963">Cytoplasm</keyword>
<keyword id="KW-0444">Lipid biosynthesis</keyword>
<keyword id="KW-0443">Lipid metabolism</keyword>
<keyword id="KW-0479">Metal-binding</keyword>
<keyword id="KW-0520">NAD</keyword>
<keyword id="KW-0521">NADP</keyword>
<keyword id="KW-0560">Oxidoreductase</keyword>
<keyword id="KW-0594">Phospholipid biosynthesis</keyword>
<keyword id="KW-1208">Phospholipid metabolism</keyword>
<keyword id="KW-1185">Reference proteome</keyword>
<keyword id="KW-0862">Zinc</keyword>
<reference key="1">
    <citation type="journal article" date="2006" name="Proc. Natl. Acad. Sci. U.S.A.">
        <title>Genomic analysis of the uncultivated marine crenarchaeote Cenarchaeum symbiosum.</title>
        <authorList>
            <person name="Hallam S.J."/>
            <person name="Konstantinidis K.T."/>
            <person name="Putnam N."/>
            <person name="Schleper C."/>
            <person name="Watanabe Y."/>
            <person name="Sugahara J."/>
            <person name="Preston C."/>
            <person name="de la Torre J."/>
            <person name="Richardson P.M."/>
            <person name="DeLong E.F."/>
        </authorList>
    </citation>
    <scope>NUCLEOTIDE SEQUENCE [LARGE SCALE GENOMIC DNA]</scope>
    <source>
        <strain>A</strain>
    </source>
</reference>
<name>G1PDH_CENSY</name>
<gene>
    <name evidence="1" type="primary">egsA</name>
    <name type="ordered locus">CENSYa_1547</name>
</gene>
<feature type="chain" id="PRO_0000350643" description="Glycerol-1-phosphate dehydrogenase [NAD(P)+]">
    <location>
        <begin position="1"/>
        <end position="354"/>
    </location>
</feature>
<feature type="binding site" evidence="1">
    <location>
        <begin position="103"/>
        <end position="107"/>
    </location>
    <ligand>
        <name>NAD(+)</name>
        <dbReference type="ChEBI" id="CHEBI:57540"/>
    </ligand>
</feature>
<feature type="binding site" evidence="1">
    <location>
        <begin position="125"/>
        <end position="128"/>
    </location>
    <ligand>
        <name>NAD(+)</name>
        <dbReference type="ChEBI" id="CHEBI:57540"/>
    </ligand>
</feature>
<feature type="binding site" evidence="1">
    <location>
        <position position="130"/>
    </location>
    <ligand>
        <name>substrate</name>
    </ligand>
</feature>
<feature type="binding site" evidence="1">
    <location>
        <position position="134"/>
    </location>
    <ligand>
        <name>NAD(+)</name>
        <dbReference type="ChEBI" id="CHEBI:57540"/>
    </ligand>
</feature>
<feature type="binding site" evidence="1">
    <location>
        <position position="176"/>
    </location>
    <ligand>
        <name>substrate</name>
    </ligand>
</feature>
<feature type="binding site" evidence="1">
    <location>
        <position position="176"/>
    </location>
    <ligand>
        <name>Zn(2+)</name>
        <dbReference type="ChEBI" id="CHEBI:29105"/>
        <note>catalytic</note>
    </ligand>
</feature>
<feature type="binding site" evidence="1">
    <location>
        <position position="255"/>
    </location>
    <ligand>
        <name>Zn(2+)</name>
        <dbReference type="ChEBI" id="CHEBI:29105"/>
        <note>catalytic</note>
    </ligand>
</feature>
<feature type="binding site" evidence="1">
    <location>
        <position position="259"/>
    </location>
    <ligand>
        <name>substrate</name>
    </ligand>
</feature>
<feature type="binding site" evidence="1">
    <location>
        <position position="271"/>
    </location>
    <ligand>
        <name>Zn(2+)</name>
        <dbReference type="ChEBI" id="CHEBI:29105"/>
        <note>catalytic</note>
    </ligand>
</feature>
<sequence>MPGGRDPMPSHTMELPRLIVIGEGNMGDLGPFLGSLGGPRTVSLISGRTVQGATGRKIEGSLKRSGIKWSWHMAGTNDPESIASVQEAVRSDESGMAVGIGGGRAVDTAKMAAFKLGIPFVSVPTAASHDGIASPFVSIKGDKPHSITATAPLGVFVDIGVIRKAPARLLASGCGDLVANMIAVRDWELGRDRKGEYYGRYAASLALMSAKIVMENAARFAREGVDERVVVEALISAGVASCIAGSSRPCSGAEHLFSHALDRIAPGAGLHGEKCGIGSIMMAKLQGQDWKGIAGALKSVGAPTTARQIGLDREDLIEALMTAQGLRPERYTILEEAGMSRRRAAALARVTGVA</sequence>
<comment type="function">
    <text evidence="1">Catalyzes the NAD(P)H-dependent reduction of dihydroxyacetonephosphate (DHAP or glycerone phosphate) to glycerol 1-phosphate (G1P). The G1P thus generated is used as the glycerophosphate backbone of phospholipids in the cellular membranes of Archaea.</text>
</comment>
<comment type="catalytic activity">
    <reaction evidence="1">
        <text>sn-glycerol 1-phosphate + NAD(+) = dihydroxyacetone phosphate + NADH + H(+)</text>
        <dbReference type="Rhea" id="RHEA:21412"/>
        <dbReference type="ChEBI" id="CHEBI:15378"/>
        <dbReference type="ChEBI" id="CHEBI:57540"/>
        <dbReference type="ChEBI" id="CHEBI:57642"/>
        <dbReference type="ChEBI" id="CHEBI:57685"/>
        <dbReference type="ChEBI" id="CHEBI:57945"/>
        <dbReference type="EC" id="1.1.1.261"/>
    </reaction>
</comment>
<comment type="catalytic activity">
    <reaction evidence="1">
        <text>sn-glycerol 1-phosphate + NADP(+) = dihydroxyacetone phosphate + NADPH + H(+)</text>
        <dbReference type="Rhea" id="RHEA:21416"/>
        <dbReference type="ChEBI" id="CHEBI:15378"/>
        <dbReference type="ChEBI" id="CHEBI:57642"/>
        <dbReference type="ChEBI" id="CHEBI:57685"/>
        <dbReference type="ChEBI" id="CHEBI:57783"/>
        <dbReference type="ChEBI" id="CHEBI:58349"/>
        <dbReference type="EC" id="1.1.1.261"/>
    </reaction>
</comment>
<comment type="cofactor">
    <cofactor evidence="1">
        <name>Zn(2+)</name>
        <dbReference type="ChEBI" id="CHEBI:29105"/>
    </cofactor>
    <text evidence="1">Binds 1 zinc ion per subunit.</text>
</comment>
<comment type="pathway">
    <text evidence="1">Membrane lipid metabolism; glycerophospholipid metabolism.</text>
</comment>
<comment type="subunit">
    <text evidence="1">Homodimer.</text>
</comment>
<comment type="subcellular location">
    <subcellularLocation>
        <location evidence="1">Cytoplasm</location>
    </subcellularLocation>
</comment>
<comment type="similarity">
    <text evidence="1">Belongs to the glycerol-1-phosphate dehydrogenase family.</text>
</comment>